<organism>
    <name type="scientific">Escherichia coli O7:K1 (strain IAI39 / ExPEC)</name>
    <dbReference type="NCBI Taxonomy" id="585057"/>
    <lineage>
        <taxon>Bacteria</taxon>
        <taxon>Pseudomonadati</taxon>
        <taxon>Pseudomonadota</taxon>
        <taxon>Gammaproteobacteria</taxon>
        <taxon>Enterobacterales</taxon>
        <taxon>Enterobacteriaceae</taxon>
        <taxon>Escherichia</taxon>
    </lineage>
</organism>
<feature type="chain" id="PRO_1000137422" description="Phosphatidylglycerol--prolipoprotein diacylglyceryl transferase">
    <location>
        <begin position="1"/>
        <end position="291"/>
    </location>
</feature>
<feature type="transmembrane region" description="Helical" evidence="1">
    <location>
        <begin position="21"/>
        <end position="41"/>
    </location>
</feature>
<feature type="transmembrane region" description="Helical" evidence="1">
    <location>
        <begin position="60"/>
        <end position="80"/>
    </location>
</feature>
<feature type="transmembrane region" description="Helical" evidence="1">
    <location>
        <begin position="96"/>
        <end position="116"/>
    </location>
</feature>
<feature type="transmembrane region" description="Helical" evidence="1">
    <location>
        <begin position="225"/>
        <end position="245"/>
    </location>
</feature>
<feature type="transmembrane region" description="Helical" evidence="1">
    <location>
        <begin position="260"/>
        <end position="280"/>
    </location>
</feature>
<feature type="binding site" evidence="1">
    <location>
        <position position="143"/>
    </location>
    <ligand>
        <name>a 1,2-diacyl-sn-glycero-3-phospho-(1'-sn-glycerol)</name>
        <dbReference type="ChEBI" id="CHEBI:64716"/>
    </ligand>
</feature>
<evidence type="ECO:0000255" key="1">
    <source>
        <dbReference type="HAMAP-Rule" id="MF_01147"/>
    </source>
</evidence>
<accession>B7NVX3</accession>
<proteinExistence type="inferred from homology"/>
<protein>
    <recommendedName>
        <fullName evidence="1">Phosphatidylglycerol--prolipoprotein diacylglyceryl transferase</fullName>
        <ecNumber evidence="1">2.5.1.145</ecNumber>
    </recommendedName>
</protein>
<dbReference type="EC" id="2.5.1.145" evidence="1"/>
<dbReference type="EMBL" id="CU928164">
    <property type="protein sequence ID" value="CAR19366.1"/>
    <property type="molecule type" value="Genomic_DNA"/>
</dbReference>
<dbReference type="RefSeq" id="WP_000204658.1">
    <property type="nucleotide sequence ID" value="NC_011750.1"/>
</dbReference>
<dbReference type="RefSeq" id="YP_002409171.1">
    <property type="nucleotide sequence ID" value="NC_011750.1"/>
</dbReference>
<dbReference type="SMR" id="B7NVX3"/>
<dbReference type="STRING" id="585057.ECIAI39_3247"/>
<dbReference type="GeneID" id="93779170"/>
<dbReference type="KEGG" id="ect:ECIAI39_3247"/>
<dbReference type="PATRIC" id="fig|585057.6.peg.3374"/>
<dbReference type="HOGENOM" id="CLU_013386_1_0_6"/>
<dbReference type="UniPathway" id="UPA00664"/>
<dbReference type="Proteomes" id="UP000000749">
    <property type="component" value="Chromosome"/>
</dbReference>
<dbReference type="GO" id="GO:0005886">
    <property type="term" value="C:plasma membrane"/>
    <property type="evidence" value="ECO:0007669"/>
    <property type="project" value="UniProtKB-SubCell"/>
</dbReference>
<dbReference type="GO" id="GO:0008961">
    <property type="term" value="F:phosphatidylglycerol-prolipoprotein diacylglyceryl transferase activity"/>
    <property type="evidence" value="ECO:0007669"/>
    <property type="project" value="UniProtKB-UniRule"/>
</dbReference>
<dbReference type="GO" id="GO:0042158">
    <property type="term" value="P:lipoprotein biosynthetic process"/>
    <property type="evidence" value="ECO:0007669"/>
    <property type="project" value="UniProtKB-UniRule"/>
</dbReference>
<dbReference type="HAMAP" id="MF_01147">
    <property type="entry name" value="Lgt"/>
    <property type="match status" value="1"/>
</dbReference>
<dbReference type="InterPro" id="IPR001640">
    <property type="entry name" value="Lgt"/>
</dbReference>
<dbReference type="NCBIfam" id="TIGR00544">
    <property type="entry name" value="lgt"/>
    <property type="match status" value="1"/>
</dbReference>
<dbReference type="PANTHER" id="PTHR30589:SF0">
    <property type="entry name" value="PHOSPHATIDYLGLYCEROL--PROLIPOPROTEIN DIACYLGLYCERYL TRANSFERASE"/>
    <property type="match status" value="1"/>
</dbReference>
<dbReference type="PANTHER" id="PTHR30589">
    <property type="entry name" value="PROLIPOPROTEIN DIACYLGLYCERYL TRANSFERASE"/>
    <property type="match status" value="1"/>
</dbReference>
<dbReference type="Pfam" id="PF01790">
    <property type="entry name" value="LGT"/>
    <property type="match status" value="1"/>
</dbReference>
<dbReference type="PROSITE" id="PS01311">
    <property type="entry name" value="LGT"/>
    <property type="match status" value="1"/>
</dbReference>
<reference key="1">
    <citation type="journal article" date="2009" name="PLoS Genet.">
        <title>Organised genome dynamics in the Escherichia coli species results in highly diverse adaptive paths.</title>
        <authorList>
            <person name="Touchon M."/>
            <person name="Hoede C."/>
            <person name="Tenaillon O."/>
            <person name="Barbe V."/>
            <person name="Baeriswyl S."/>
            <person name="Bidet P."/>
            <person name="Bingen E."/>
            <person name="Bonacorsi S."/>
            <person name="Bouchier C."/>
            <person name="Bouvet O."/>
            <person name="Calteau A."/>
            <person name="Chiapello H."/>
            <person name="Clermont O."/>
            <person name="Cruveiller S."/>
            <person name="Danchin A."/>
            <person name="Diard M."/>
            <person name="Dossat C."/>
            <person name="Karoui M.E."/>
            <person name="Frapy E."/>
            <person name="Garry L."/>
            <person name="Ghigo J.M."/>
            <person name="Gilles A.M."/>
            <person name="Johnson J."/>
            <person name="Le Bouguenec C."/>
            <person name="Lescat M."/>
            <person name="Mangenot S."/>
            <person name="Martinez-Jehanne V."/>
            <person name="Matic I."/>
            <person name="Nassif X."/>
            <person name="Oztas S."/>
            <person name="Petit M.A."/>
            <person name="Pichon C."/>
            <person name="Rouy Z."/>
            <person name="Ruf C.S."/>
            <person name="Schneider D."/>
            <person name="Tourret J."/>
            <person name="Vacherie B."/>
            <person name="Vallenet D."/>
            <person name="Medigue C."/>
            <person name="Rocha E.P.C."/>
            <person name="Denamur E."/>
        </authorList>
    </citation>
    <scope>NUCLEOTIDE SEQUENCE [LARGE SCALE GENOMIC DNA]</scope>
    <source>
        <strain>IAI39 / ExPEC</strain>
    </source>
</reference>
<comment type="function">
    <text evidence="1">Catalyzes the transfer of the diacylglyceryl group from phosphatidylglycerol to the sulfhydryl group of the N-terminal cysteine of a prolipoprotein, the first step in the formation of mature lipoproteins.</text>
</comment>
<comment type="catalytic activity">
    <reaction evidence="1">
        <text>L-cysteinyl-[prolipoprotein] + a 1,2-diacyl-sn-glycero-3-phospho-(1'-sn-glycerol) = an S-1,2-diacyl-sn-glyceryl-L-cysteinyl-[prolipoprotein] + sn-glycerol 1-phosphate + H(+)</text>
        <dbReference type="Rhea" id="RHEA:56712"/>
        <dbReference type="Rhea" id="RHEA-COMP:14679"/>
        <dbReference type="Rhea" id="RHEA-COMP:14680"/>
        <dbReference type="ChEBI" id="CHEBI:15378"/>
        <dbReference type="ChEBI" id="CHEBI:29950"/>
        <dbReference type="ChEBI" id="CHEBI:57685"/>
        <dbReference type="ChEBI" id="CHEBI:64716"/>
        <dbReference type="ChEBI" id="CHEBI:140658"/>
        <dbReference type="EC" id="2.5.1.145"/>
    </reaction>
</comment>
<comment type="pathway">
    <text evidence="1">Protein modification; lipoprotein biosynthesis (diacylglyceryl transfer).</text>
</comment>
<comment type="subcellular location">
    <subcellularLocation>
        <location evidence="1">Cell inner membrane</location>
        <topology evidence="1">Multi-pass membrane protein</topology>
    </subcellularLocation>
</comment>
<comment type="similarity">
    <text evidence="1">Belongs to the Lgt family.</text>
</comment>
<gene>
    <name evidence="1" type="primary">lgt</name>
    <name type="ordered locus">ECIAI39_3247</name>
</gene>
<keyword id="KW-0997">Cell inner membrane</keyword>
<keyword id="KW-1003">Cell membrane</keyword>
<keyword id="KW-0472">Membrane</keyword>
<keyword id="KW-0808">Transferase</keyword>
<keyword id="KW-0812">Transmembrane</keyword>
<keyword id="KW-1133">Transmembrane helix</keyword>
<sequence length="291" mass="33108">MTSSYLHFPEFDPVIFSIGPVALHWYGLMYLVGFIFAMWLATRRANRPGSGWTKNEVENLLYAGFLGVFLGGRIGYVLFYNFPQFMADPLYLFRVWDGGMSFHGGLIGVIVVMIIFARRTKRSFFQVSDFIAPLIPFGLGAGRLGNFINGELWGRVDPNFPFAMLFPGSRTEDILLLQTNPQWQSIFDTYGVLPRHPSQLYELLLEGVVLFIILNLYIRKPRPMGAVSGLFLIGYGAFRIIVEFFRQPDAQFTGAWVQYISMGQILSIPMIVAGVIMMVWAYRRSPQQHVS</sequence>
<name>LGT_ECO7I</name>